<reference key="1">
    <citation type="journal article" date="1998" name="Microbiology">
        <title>The 172 kb prkA-addAB region from 83 degrees to 97 degrees of the Bacillus subtilis chromosome contains several dysfunctional genes, the glyB marker, many genes encoding transporter proteins, and the ubiquitous hit gene.</title>
        <authorList>
            <person name="Noback M.A."/>
            <person name="Holsappel S."/>
            <person name="Kiewiet R."/>
            <person name="Terpstra P."/>
            <person name="Wambutt R."/>
            <person name="Wedler H."/>
            <person name="Venema G."/>
            <person name="Bron S."/>
        </authorList>
    </citation>
    <scope>NUCLEOTIDE SEQUENCE [GENOMIC DNA]</scope>
    <source>
        <strain>168</strain>
    </source>
</reference>
<reference key="2">
    <citation type="journal article" date="1997" name="Nature">
        <title>The complete genome sequence of the Gram-positive bacterium Bacillus subtilis.</title>
        <authorList>
            <person name="Kunst F."/>
            <person name="Ogasawara N."/>
            <person name="Moszer I."/>
            <person name="Albertini A.M."/>
            <person name="Alloni G."/>
            <person name="Azevedo V."/>
            <person name="Bertero M.G."/>
            <person name="Bessieres P."/>
            <person name="Bolotin A."/>
            <person name="Borchert S."/>
            <person name="Borriss R."/>
            <person name="Boursier L."/>
            <person name="Brans A."/>
            <person name="Braun M."/>
            <person name="Brignell S.C."/>
            <person name="Bron S."/>
            <person name="Brouillet S."/>
            <person name="Bruschi C.V."/>
            <person name="Caldwell B."/>
            <person name="Capuano V."/>
            <person name="Carter N.M."/>
            <person name="Choi S.-K."/>
            <person name="Codani J.-J."/>
            <person name="Connerton I.F."/>
            <person name="Cummings N.J."/>
            <person name="Daniel R.A."/>
            <person name="Denizot F."/>
            <person name="Devine K.M."/>
            <person name="Duesterhoeft A."/>
            <person name="Ehrlich S.D."/>
            <person name="Emmerson P.T."/>
            <person name="Entian K.-D."/>
            <person name="Errington J."/>
            <person name="Fabret C."/>
            <person name="Ferrari E."/>
            <person name="Foulger D."/>
            <person name="Fritz C."/>
            <person name="Fujita M."/>
            <person name="Fujita Y."/>
            <person name="Fuma S."/>
            <person name="Galizzi A."/>
            <person name="Galleron N."/>
            <person name="Ghim S.-Y."/>
            <person name="Glaser P."/>
            <person name="Goffeau A."/>
            <person name="Golightly E.J."/>
            <person name="Grandi G."/>
            <person name="Guiseppi G."/>
            <person name="Guy B.J."/>
            <person name="Haga K."/>
            <person name="Haiech J."/>
            <person name="Harwood C.R."/>
            <person name="Henaut A."/>
            <person name="Hilbert H."/>
            <person name="Holsappel S."/>
            <person name="Hosono S."/>
            <person name="Hullo M.-F."/>
            <person name="Itaya M."/>
            <person name="Jones L.-M."/>
            <person name="Joris B."/>
            <person name="Karamata D."/>
            <person name="Kasahara Y."/>
            <person name="Klaerr-Blanchard M."/>
            <person name="Klein C."/>
            <person name="Kobayashi Y."/>
            <person name="Koetter P."/>
            <person name="Koningstein G."/>
            <person name="Krogh S."/>
            <person name="Kumano M."/>
            <person name="Kurita K."/>
            <person name="Lapidus A."/>
            <person name="Lardinois S."/>
            <person name="Lauber J."/>
            <person name="Lazarevic V."/>
            <person name="Lee S.-M."/>
            <person name="Levine A."/>
            <person name="Liu H."/>
            <person name="Masuda S."/>
            <person name="Mauel C."/>
            <person name="Medigue C."/>
            <person name="Medina N."/>
            <person name="Mellado R.P."/>
            <person name="Mizuno M."/>
            <person name="Moestl D."/>
            <person name="Nakai S."/>
            <person name="Noback M."/>
            <person name="Noone D."/>
            <person name="O'Reilly M."/>
            <person name="Ogawa K."/>
            <person name="Ogiwara A."/>
            <person name="Oudega B."/>
            <person name="Park S.-H."/>
            <person name="Parro V."/>
            <person name="Pohl T.M."/>
            <person name="Portetelle D."/>
            <person name="Porwollik S."/>
            <person name="Prescott A.M."/>
            <person name="Presecan E."/>
            <person name="Pujic P."/>
            <person name="Purnelle B."/>
            <person name="Rapoport G."/>
            <person name="Rey M."/>
            <person name="Reynolds S."/>
            <person name="Rieger M."/>
            <person name="Rivolta C."/>
            <person name="Rocha E."/>
            <person name="Roche B."/>
            <person name="Rose M."/>
            <person name="Sadaie Y."/>
            <person name="Sato T."/>
            <person name="Scanlan E."/>
            <person name="Schleich S."/>
            <person name="Schroeter R."/>
            <person name="Scoffone F."/>
            <person name="Sekiguchi J."/>
            <person name="Sekowska A."/>
            <person name="Seror S.J."/>
            <person name="Serror P."/>
            <person name="Shin B.-S."/>
            <person name="Soldo B."/>
            <person name="Sorokin A."/>
            <person name="Tacconi E."/>
            <person name="Takagi T."/>
            <person name="Takahashi H."/>
            <person name="Takemaru K."/>
            <person name="Takeuchi M."/>
            <person name="Tamakoshi A."/>
            <person name="Tanaka T."/>
            <person name="Terpstra P."/>
            <person name="Tognoni A."/>
            <person name="Tosato V."/>
            <person name="Uchiyama S."/>
            <person name="Vandenbol M."/>
            <person name="Vannier F."/>
            <person name="Vassarotti A."/>
            <person name="Viari A."/>
            <person name="Wambutt R."/>
            <person name="Wedler E."/>
            <person name="Wedler H."/>
            <person name="Weitzenegger T."/>
            <person name="Winters P."/>
            <person name="Wipat A."/>
            <person name="Yamamoto H."/>
            <person name="Yamane K."/>
            <person name="Yasumoto K."/>
            <person name="Yata K."/>
            <person name="Yoshida K."/>
            <person name="Yoshikawa H.-F."/>
            <person name="Zumstein E."/>
            <person name="Yoshikawa H."/>
            <person name="Danchin A."/>
        </authorList>
    </citation>
    <scope>NUCLEOTIDE SEQUENCE [LARGE SCALE GENOMIC DNA]</scope>
    <source>
        <strain>168</strain>
    </source>
</reference>
<accession>O07606</accession>
<accession>Q796U3</accession>
<protein>
    <recommendedName>
        <fullName>Uncharacterized protein YhfH</fullName>
    </recommendedName>
</protein>
<dbReference type="EMBL" id="Y14083">
    <property type="protein sequence ID" value="CAA74529.1"/>
    <property type="molecule type" value="Genomic_DNA"/>
</dbReference>
<dbReference type="EMBL" id="AL009126">
    <property type="protein sequence ID" value="CAB12863.1"/>
    <property type="molecule type" value="Genomic_DNA"/>
</dbReference>
<dbReference type="PIR" id="E69830">
    <property type="entry name" value="E69830"/>
</dbReference>
<dbReference type="RefSeq" id="NP_388904.1">
    <property type="nucleotide sequence ID" value="NC_000964.3"/>
</dbReference>
<dbReference type="RefSeq" id="WP_010886464.1">
    <property type="nucleotide sequence ID" value="NC_000964.3"/>
</dbReference>
<dbReference type="FunCoup" id="O07606">
    <property type="interactions" value="1"/>
</dbReference>
<dbReference type="STRING" id="224308.BSU10230"/>
<dbReference type="jPOST" id="O07606"/>
<dbReference type="PaxDb" id="224308-BSU10230"/>
<dbReference type="EnsemblBacteria" id="CAB12863">
    <property type="protein sequence ID" value="CAB12863"/>
    <property type="gene ID" value="BSU_10230"/>
</dbReference>
<dbReference type="GeneID" id="936305"/>
<dbReference type="KEGG" id="bsu:BSU10230"/>
<dbReference type="PATRIC" id="fig|224308.43.peg.1066"/>
<dbReference type="eggNOG" id="ENOG5033CZ0">
    <property type="taxonomic scope" value="Bacteria"/>
</dbReference>
<dbReference type="InParanoid" id="O07606"/>
<dbReference type="OrthoDB" id="1122256at2"/>
<dbReference type="BioCyc" id="BSUB:BSU10230-MONOMER"/>
<dbReference type="Proteomes" id="UP000001570">
    <property type="component" value="Chromosome"/>
</dbReference>
<dbReference type="InterPro" id="IPR025432">
    <property type="entry name" value="YhfH-like"/>
</dbReference>
<dbReference type="Pfam" id="PF14149">
    <property type="entry name" value="YhfH"/>
    <property type="match status" value="1"/>
</dbReference>
<name>YHFH_BACSU</name>
<sequence length="46" mass="5294">MVMLGKITEFFRNLPSKKCAECGKKIEEQHECYGNICNDCIKVNDL</sequence>
<feature type="chain" id="PRO_0000375908" description="Uncharacterized protein YhfH">
    <location>
        <begin position="1"/>
        <end position="46"/>
    </location>
</feature>
<organism>
    <name type="scientific">Bacillus subtilis (strain 168)</name>
    <dbReference type="NCBI Taxonomy" id="224308"/>
    <lineage>
        <taxon>Bacteria</taxon>
        <taxon>Bacillati</taxon>
        <taxon>Bacillota</taxon>
        <taxon>Bacilli</taxon>
        <taxon>Bacillales</taxon>
        <taxon>Bacillaceae</taxon>
        <taxon>Bacillus</taxon>
    </lineage>
</organism>
<keyword id="KW-1185">Reference proteome</keyword>
<proteinExistence type="predicted"/>
<gene>
    <name type="primary">yhfH</name>
    <name type="ordered locus">BSU10230</name>
</gene>